<proteinExistence type="inferred from homology"/>
<dbReference type="EC" id="2.7.7.27" evidence="1"/>
<dbReference type="EMBL" id="CP000248">
    <property type="protein sequence ID" value="ABD26097.1"/>
    <property type="molecule type" value="Genomic_DNA"/>
</dbReference>
<dbReference type="RefSeq" id="WP_011445307.1">
    <property type="nucleotide sequence ID" value="NC_007794.1"/>
</dbReference>
<dbReference type="SMR" id="Q2G7S6"/>
<dbReference type="STRING" id="279238.Saro_1657"/>
<dbReference type="KEGG" id="nar:Saro_1657"/>
<dbReference type="eggNOG" id="COG0448">
    <property type="taxonomic scope" value="Bacteria"/>
</dbReference>
<dbReference type="HOGENOM" id="CLU_029499_14_1_5"/>
<dbReference type="UniPathway" id="UPA00164"/>
<dbReference type="Proteomes" id="UP000009134">
    <property type="component" value="Chromosome"/>
</dbReference>
<dbReference type="GO" id="GO:0005524">
    <property type="term" value="F:ATP binding"/>
    <property type="evidence" value="ECO:0007669"/>
    <property type="project" value="UniProtKB-KW"/>
</dbReference>
<dbReference type="GO" id="GO:0008878">
    <property type="term" value="F:glucose-1-phosphate adenylyltransferase activity"/>
    <property type="evidence" value="ECO:0007669"/>
    <property type="project" value="UniProtKB-UniRule"/>
</dbReference>
<dbReference type="GO" id="GO:0005978">
    <property type="term" value="P:glycogen biosynthetic process"/>
    <property type="evidence" value="ECO:0007669"/>
    <property type="project" value="UniProtKB-UniRule"/>
</dbReference>
<dbReference type="CDD" id="cd02508">
    <property type="entry name" value="ADP_Glucose_PP"/>
    <property type="match status" value="1"/>
</dbReference>
<dbReference type="CDD" id="cd04651">
    <property type="entry name" value="LbH_G1P_AT_C"/>
    <property type="match status" value="1"/>
</dbReference>
<dbReference type="Gene3D" id="2.160.10.10">
    <property type="entry name" value="Hexapeptide repeat proteins"/>
    <property type="match status" value="1"/>
</dbReference>
<dbReference type="Gene3D" id="3.90.550.10">
    <property type="entry name" value="Spore Coat Polysaccharide Biosynthesis Protein SpsA, Chain A"/>
    <property type="match status" value="1"/>
</dbReference>
<dbReference type="HAMAP" id="MF_00624">
    <property type="entry name" value="GlgC"/>
    <property type="match status" value="1"/>
</dbReference>
<dbReference type="InterPro" id="IPR011831">
    <property type="entry name" value="ADP-Glc_PPase"/>
</dbReference>
<dbReference type="InterPro" id="IPR005836">
    <property type="entry name" value="ADP_Glu_pyroP_CS"/>
</dbReference>
<dbReference type="InterPro" id="IPR023049">
    <property type="entry name" value="GlgC_bac"/>
</dbReference>
<dbReference type="InterPro" id="IPR056818">
    <property type="entry name" value="GlmU/GlgC-like_hexapep"/>
</dbReference>
<dbReference type="InterPro" id="IPR005835">
    <property type="entry name" value="NTP_transferase_dom"/>
</dbReference>
<dbReference type="InterPro" id="IPR029044">
    <property type="entry name" value="Nucleotide-diphossugar_trans"/>
</dbReference>
<dbReference type="InterPro" id="IPR011004">
    <property type="entry name" value="Trimer_LpxA-like_sf"/>
</dbReference>
<dbReference type="NCBIfam" id="TIGR02091">
    <property type="entry name" value="glgC"/>
    <property type="match status" value="1"/>
</dbReference>
<dbReference type="NCBIfam" id="NF001947">
    <property type="entry name" value="PRK00725.1"/>
    <property type="match status" value="1"/>
</dbReference>
<dbReference type="NCBIfam" id="NF002023">
    <property type="entry name" value="PRK00844.1"/>
    <property type="match status" value="1"/>
</dbReference>
<dbReference type="PANTHER" id="PTHR43523:SF2">
    <property type="entry name" value="GLUCOSE-1-PHOSPHATE ADENYLYLTRANSFERASE"/>
    <property type="match status" value="1"/>
</dbReference>
<dbReference type="PANTHER" id="PTHR43523">
    <property type="entry name" value="GLUCOSE-1-PHOSPHATE ADENYLYLTRANSFERASE-RELATED"/>
    <property type="match status" value="1"/>
</dbReference>
<dbReference type="Pfam" id="PF24894">
    <property type="entry name" value="Hexapep_GlmU"/>
    <property type="match status" value="1"/>
</dbReference>
<dbReference type="Pfam" id="PF00483">
    <property type="entry name" value="NTP_transferase"/>
    <property type="match status" value="1"/>
</dbReference>
<dbReference type="SUPFAM" id="SSF53448">
    <property type="entry name" value="Nucleotide-diphospho-sugar transferases"/>
    <property type="match status" value="1"/>
</dbReference>
<dbReference type="SUPFAM" id="SSF51161">
    <property type="entry name" value="Trimeric LpxA-like enzymes"/>
    <property type="match status" value="1"/>
</dbReference>
<dbReference type="PROSITE" id="PS00808">
    <property type="entry name" value="ADP_GLC_PYROPHOSPH_1"/>
    <property type="match status" value="1"/>
</dbReference>
<dbReference type="PROSITE" id="PS00809">
    <property type="entry name" value="ADP_GLC_PYROPHOSPH_2"/>
    <property type="match status" value="1"/>
</dbReference>
<dbReference type="PROSITE" id="PS00810">
    <property type="entry name" value="ADP_GLC_PYROPHOSPH_3"/>
    <property type="match status" value="1"/>
</dbReference>
<reference key="1">
    <citation type="submission" date="2006-01" db="EMBL/GenBank/DDBJ databases">
        <title>Complete sequence of Novosphingobium aromaticivorans DSM 12444.</title>
        <authorList>
            <consortium name="US DOE Joint Genome Institute"/>
            <person name="Copeland A."/>
            <person name="Lucas S."/>
            <person name="Lapidus A."/>
            <person name="Barry K."/>
            <person name="Detter J.C."/>
            <person name="Glavina T."/>
            <person name="Hammon N."/>
            <person name="Israni S."/>
            <person name="Pitluck S."/>
            <person name="Chain P."/>
            <person name="Malfatti S."/>
            <person name="Shin M."/>
            <person name="Vergez L."/>
            <person name="Schmutz J."/>
            <person name="Larimer F."/>
            <person name="Land M."/>
            <person name="Kyrpides N."/>
            <person name="Ivanova N."/>
            <person name="Fredrickson J."/>
            <person name="Balkwill D."/>
            <person name="Romine M.F."/>
            <person name="Richardson P."/>
        </authorList>
    </citation>
    <scope>NUCLEOTIDE SEQUENCE [LARGE SCALE GENOMIC DNA]</scope>
    <source>
        <strain>ATCC 700278 / DSM 12444 / CCUG 56034 / CIP 105152 / NBRC 16084 / F199</strain>
    </source>
</reference>
<evidence type="ECO:0000255" key="1">
    <source>
        <dbReference type="HAMAP-Rule" id="MF_00624"/>
    </source>
</evidence>
<organism>
    <name type="scientific">Novosphingobium aromaticivorans (strain ATCC 700278 / DSM 12444 / CCUG 56034 / CIP 105152 / NBRC 16084 / F199)</name>
    <dbReference type="NCBI Taxonomy" id="279238"/>
    <lineage>
        <taxon>Bacteria</taxon>
        <taxon>Pseudomonadati</taxon>
        <taxon>Pseudomonadota</taxon>
        <taxon>Alphaproteobacteria</taxon>
        <taxon>Sphingomonadales</taxon>
        <taxon>Sphingomonadaceae</taxon>
        <taxon>Novosphingobium</taxon>
    </lineage>
</organism>
<gene>
    <name evidence="1" type="primary">glgC</name>
    <name type="ordered locus">Saro_1657</name>
</gene>
<sequence length="419" mass="46623">MRDTYSQPLARDAMAYVLAGGRGSRLKELTDNRAKPAVYFGGKSRIIDFALSNAINSGIRRIGVATQYKAHSLIRHMQRAWNFMRPERNESFDILPASQRVSEHQWYEGTADAVYQNLDIIASYAPKYMVILAGDHIYKMDYELMLRQHVESGADVTIGCLVVPRIEATGFGVMAVDTSDTITAFVEKPANPPGIPGNEDMALASMGIYVFDTKFLFDILREDAADPSSSRDFGNDIIPKIVRNGKAVAHRFTASCIRAAEEIEEYWRDVGTLDAYFEANLDLTDVVPKLNMYDRDWPIWTDQIIAAPAKFVHDEDGRRGMAISSLISQDCIVSGAIARRSLLFTGVKMGSFSSCEEAVILPYCNIGRGARLSRVILDSGVRIPEGLVVGEDPELDARRFQRTESGVCLITKRMIDQLA</sequence>
<name>GLGC_NOVAD</name>
<keyword id="KW-0067">ATP-binding</keyword>
<keyword id="KW-0119">Carbohydrate metabolism</keyword>
<keyword id="KW-0320">Glycogen biosynthesis</keyword>
<keyword id="KW-0321">Glycogen metabolism</keyword>
<keyword id="KW-0547">Nucleotide-binding</keyword>
<keyword id="KW-0548">Nucleotidyltransferase</keyword>
<keyword id="KW-1185">Reference proteome</keyword>
<keyword id="KW-0808">Transferase</keyword>
<feature type="chain" id="PRO_0000261884" description="Glucose-1-phosphate adenylyltransferase">
    <location>
        <begin position="1"/>
        <end position="419"/>
    </location>
</feature>
<feature type="binding site" evidence="1">
    <location>
        <position position="107"/>
    </location>
    <ligand>
        <name>alpha-D-glucose 1-phosphate</name>
        <dbReference type="ChEBI" id="CHEBI:58601"/>
    </ligand>
</feature>
<feature type="binding site" evidence="1">
    <location>
        <position position="172"/>
    </location>
    <ligand>
        <name>alpha-D-glucose 1-phosphate</name>
        <dbReference type="ChEBI" id="CHEBI:58601"/>
    </ligand>
</feature>
<feature type="binding site" evidence="1">
    <location>
        <begin position="187"/>
        <end position="188"/>
    </location>
    <ligand>
        <name>alpha-D-glucose 1-phosphate</name>
        <dbReference type="ChEBI" id="CHEBI:58601"/>
    </ligand>
</feature>
<feature type="binding site" evidence="1">
    <location>
        <position position="205"/>
    </location>
    <ligand>
        <name>alpha-D-glucose 1-phosphate</name>
        <dbReference type="ChEBI" id="CHEBI:58601"/>
    </ligand>
</feature>
<protein>
    <recommendedName>
        <fullName evidence="1">Glucose-1-phosphate adenylyltransferase</fullName>
        <ecNumber evidence="1">2.7.7.27</ecNumber>
    </recommendedName>
    <alternativeName>
        <fullName evidence="1">ADP-glucose pyrophosphorylase</fullName>
        <shortName evidence="1">ADPGlc PPase</shortName>
    </alternativeName>
    <alternativeName>
        <fullName evidence="1">ADP-glucose synthase</fullName>
    </alternativeName>
</protein>
<comment type="function">
    <text evidence="1">Involved in the biosynthesis of ADP-glucose, a building block required for the elongation reactions to produce glycogen. Catalyzes the reaction between ATP and alpha-D-glucose 1-phosphate (G1P) to produce pyrophosphate and ADP-Glc.</text>
</comment>
<comment type="catalytic activity">
    <reaction evidence="1">
        <text>alpha-D-glucose 1-phosphate + ATP + H(+) = ADP-alpha-D-glucose + diphosphate</text>
        <dbReference type="Rhea" id="RHEA:12120"/>
        <dbReference type="ChEBI" id="CHEBI:15378"/>
        <dbReference type="ChEBI" id="CHEBI:30616"/>
        <dbReference type="ChEBI" id="CHEBI:33019"/>
        <dbReference type="ChEBI" id="CHEBI:57498"/>
        <dbReference type="ChEBI" id="CHEBI:58601"/>
        <dbReference type="EC" id="2.7.7.27"/>
    </reaction>
</comment>
<comment type="pathway">
    <text evidence="1">Glycan biosynthesis; glycogen biosynthesis.</text>
</comment>
<comment type="subunit">
    <text evidence="1">Homotetramer.</text>
</comment>
<comment type="similarity">
    <text evidence="1">Belongs to the bacterial/plant glucose-1-phosphate adenylyltransferase family.</text>
</comment>
<accession>Q2G7S6</accession>